<protein>
    <recommendedName>
        <fullName>Uncharacterized protein YbgA</fullName>
    </recommendedName>
    <alternativeName>
        <fullName>ORF169</fullName>
    </alternativeName>
    <alternativeName>
        <fullName>TKP</fullName>
    </alternativeName>
</protein>
<reference key="1">
    <citation type="journal article" date="1984" name="J. Biol. Chem.">
        <title>Sequences of the Escherichia coli photolyase gene and protein.</title>
        <authorList>
            <person name="Sancar G.B."/>
            <person name="Smith F.W."/>
            <person name="Lorence M.C."/>
            <person name="Rupert C.S."/>
            <person name="Sancar A."/>
        </authorList>
    </citation>
    <scope>NUCLEOTIDE SEQUENCE [GENOMIC DNA]</scope>
</reference>
<reference key="2">
    <citation type="journal article" date="1996" name="DNA Res.">
        <title>A 718-kb DNA sequence of the Escherichia coli K-12 genome corresponding to the 12.7-28.0 min region on the linkage map.</title>
        <authorList>
            <person name="Oshima T."/>
            <person name="Aiba H."/>
            <person name="Baba T."/>
            <person name="Fujita K."/>
            <person name="Hayashi K."/>
            <person name="Honjo A."/>
            <person name="Ikemoto K."/>
            <person name="Inada T."/>
            <person name="Itoh T."/>
            <person name="Kajihara M."/>
            <person name="Kanai K."/>
            <person name="Kashimoto K."/>
            <person name="Kimura S."/>
            <person name="Kitagawa M."/>
            <person name="Makino K."/>
            <person name="Masuda S."/>
            <person name="Miki T."/>
            <person name="Mizobuchi K."/>
            <person name="Mori H."/>
            <person name="Motomura K."/>
            <person name="Nakamura Y."/>
            <person name="Nashimoto H."/>
            <person name="Nishio Y."/>
            <person name="Saito N."/>
            <person name="Sampei G."/>
            <person name="Seki Y."/>
            <person name="Tagami H."/>
            <person name="Takemoto K."/>
            <person name="Wada C."/>
            <person name="Yamamoto Y."/>
            <person name="Yano M."/>
            <person name="Horiuchi T."/>
        </authorList>
    </citation>
    <scope>NUCLEOTIDE SEQUENCE [LARGE SCALE GENOMIC DNA]</scope>
    <source>
        <strain>K12 / W3110 / ATCC 27325 / DSM 5911</strain>
    </source>
</reference>
<reference key="3">
    <citation type="journal article" date="1997" name="Science">
        <title>The complete genome sequence of Escherichia coli K-12.</title>
        <authorList>
            <person name="Blattner F.R."/>
            <person name="Plunkett G. III"/>
            <person name="Bloch C.A."/>
            <person name="Perna N.T."/>
            <person name="Burland V."/>
            <person name="Riley M."/>
            <person name="Collado-Vides J."/>
            <person name="Glasner J.D."/>
            <person name="Rode C.K."/>
            <person name="Mayhew G.F."/>
            <person name="Gregor J."/>
            <person name="Davis N.W."/>
            <person name="Kirkpatrick H.A."/>
            <person name="Goeden M.A."/>
            <person name="Rose D.J."/>
            <person name="Mau B."/>
            <person name="Shao Y."/>
        </authorList>
    </citation>
    <scope>NUCLEOTIDE SEQUENCE [LARGE SCALE GENOMIC DNA]</scope>
    <source>
        <strain>K12 / MG1655 / ATCC 47076</strain>
    </source>
</reference>
<reference key="4">
    <citation type="journal article" date="2006" name="Mol. Syst. Biol.">
        <title>Highly accurate genome sequences of Escherichia coli K-12 strains MG1655 and W3110.</title>
        <authorList>
            <person name="Hayashi K."/>
            <person name="Morooka N."/>
            <person name="Yamamoto Y."/>
            <person name="Fujita K."/>
            <person name="Isono K."/>
            <person name="Choi S."/>
            <person name="Ohtsubo E."/>
            <person name="Baba T."/>
            <person name="Wanner B.L."/>
            <person name="Mori H."/>
            <person name="Horiuchi T."/>
        </authorList>
    </citation>
    <scope>NUCLEOTIDE SEQUENCE [LARGE SCALE GENOMIC DNA]</scope>
    <source>
        <strain>K12 / W3110 / ATCC 27325 / DSM 5911</strain>
    </source>
</reference>
<reference key="5">
    <citation type="journal article" date="1993" name="J. Bacteriol.">
        <title>Rhs elements of Escherichia coli K-12: complex composites of shared and unique components that have different evolutionary histories.</title>
        <authorList>
            <person name="Zhao S."/>
            <person name="Sandt C.H."/>
            <person name="Feulner G."/>
            <person name="Vlazny D.A."/>
            <person name="Gray J.A."/>
            <person name="Hill C.W."/>
        </authorList>
    </citation>
    <scope>NUCLEOTIDE SEQUENCE [GENOMIC DNA] OF 1-115</scope>
    <source>
        <strain>K12</strain>
    </source>
</reference>
<feature type="chain" id="PRO_0000168699" description="Uncharacterized protein YbgA">
    <location>
        <begin position="1"/>
        <end position="169"/>
    </location>
</feature>
<gene>
    <name type="primary">ybgA</name>
    <name type="ordered locus">b0707</name>
    <name type="ordered locus">JW0697</name>
</gene>
<name>YBGA_ECOLI</name>
<dbReference type="EMBL" id="K01299">
    <property type="protein sequence ID" value="AAA24387.1"/>
    <property type="molecule type" value="Genomic_DNA"/>
</dbReference>
<dbReference type="EMBL" id="U00096">
    <property type="protein sequence ID" value="AAC73801.1"/>
    <property type="molecule type" value="Genomic_DNA"/>
</dbReference>
<dbReference type="EMBL" id="AP009048">
    <property type="protein sequence ID" value="BAA35366.1"/>
    <property type="molecule type" value="Genomic_DNA"/>
</dbReference>
<dbReference type="EMBL" id="L02373">
    <property type="protein sequence ID" value="AAC63077.1"/>
    <property type="molecule type" value="Genomic_DNA"/>
</dbReference>
<dbReference type="PIR" id="B64806">
    <property type="entry name" value="B64806"/>
</dbReference>
<dbReference type="RefSeq" id="NP_415235.1">
    <property type="nucleotide sequence ID" value="NC_000913.3"/>
</dbReference>
<dbReference type="RefSeq" id="WP_001053305.1">
    <property type="nucleotide sequence ID" value="NZ_STEB01000035.1"/>
</dbReference>
<dbReference type="SMR" id="P24252"/>
<dbReference type="BioGRID" id="4261605">
    <property type="interactions" value="25"/>
</dbReference>
<dbReference type="FunCoup" id="P24252">
    <property type="interactions" value="57"/>
</dbReference>
<dbReference type="IntAct" id="P24252">
    <property type="interactions" value="6"/>
</dbReference>
<dbReference type="STRING" id="511145.b0707"/>
<dbReference type="jPOST" id="P24252"/>
<dbReference type="PaxDb" id="511145-b0707"/>
<dbReference type="EnsemblBacteria" id="AAC73801">
    <property type="protein sequence ID" value="AAC73801"/>
    <property type="gene ID" value="b0707"/>
</dbReference>
<dbReference type="GeneID" id="944853"/>
<dbReference type="KEGG" id="ecj:JW0697"/>
<dbReference type="KEGG" id="eco:b0707"/>
<dbReference type="KEGG" id="ecoc:C3026_03535"/>
<dbReference type="PATRIC" id="fig|511145.12.peg.737"/>
<dbReference type="EchoBASE" id="EB1099"/>
<dbReference type="eggNOG" id="COG3272">
    <property type="taxonomic scope" value="Bacteria"/>
</dbReference>
<dbReference type="HOGENOM" id="CLU_076318_3_1_6"/>
<dbReference type="InParanoid" id="P24252"/>
<dbReference type="OMA" id="ANTRDHT"/>
<dbReference type="OrthoDB" id="495783at2"/>
<dbReference type="PhylomeDB" id="P24252"/>
<dbReference type="BioCyc" id="EcoCyc:EG11108-MONOMER"/>
<dbReference type="PRO" id="PR:P24252"/>
<dbReference type="Proteomes" id="UP000000625">
    <property type="component" value="Chromosome"/>
</dbReference>
<dbReference type="InterPro" id="IPR013560">
    <property type="entry name" value="DUF1722"/>
</dbReference>
<dbReference type="NCBIfam" id="NF007549">
    <property type="entry name" value="PRK10167.1"/>
    <property type="match status" value="1"/>
</dbReference>
<dbReference type="PANTHER" id="PTHR30087">
    <property type="entry name" value="INNER MEMBRANE PROTEIN"/>
    <property type="match status" value="1"/>
</dbReference>
<dbReference type="PANTHER" id="PTHR30087:SF0">
    <property type="entry name" value="INNER MEMBRANE PROTEIN"/>
    <property type="match status" value="1"/>
</dbReference>
<dbReference type="Pfam" id="PF08349">
    <property type="entry name" value="DUF1722"/>
    <property type="match status" value="1"/>
</dbReference>
<keyword id="KW-1185">Reference proteome</keyword>
<accession>P24252</accession>
<proteinExistence type="predicted"/>
<organism>
    <name type="scientific">Escherichia coli (strain K12)</name>
    <dbReference type="NCBI Taxonomy" id="83333"/>
    <lineage>
        <taxon>Bacteria</taxon>
        <taxon>Pseudomonadati</taxon>
        <taxon>Pseudomonadota</taxon>
        <taxon>Gammaproteobacteria</taxon>
        <taxon>Enterobacterales</taxon>
        <taxon>Enterobacteriaceae</taxon>
        <taxon>Escherichia</taxon>
    </lineage>
</organism>
<sequence length="169" mass="20211">MNLQRFDDSTLIRIFALHELHRLKEHGLTRGALLDYHSRYKLVFLAHSQPEYRKLGPFVADIHQWQNLDDYYNQYRQRVVVLLSHPANPRDHTNVLMHVQGYFRPHIDSTERQQLAALIDSYRRGEQPLLAPLMRIKHYMALYPDAWLSGQRYFELWPRVINLRHSGVL</sequence>